<keyword id="KW-0002">3D-structure</keyword>
<keyword id="KW-0903">Direct protein sequencing</keyword>
<keyword id="KW-1015">Disulfide bond</keyword>
<keyword id="KW-0959">Myotoxin</keyword>
<keyword id="KW-0964">Secreted</keyword>
<keyword id="KW-0800">Toxin</keyword>
<evidence type="ECO:0000250" key="1">
    <source>
        <dbReference type="UniProtKB" id="I6L8L6"/>
    </source>
</evidence>
<evidence type="ECO:0000250" key="2">
    <source>
        <dbReference type="UniProtKB" id="P24605"/>
    </source>
</evidence>
<evidence type="ECO:0000269" key="3">
    <source>
    </source>
</evidence>
<evidence type="ECO:0000269" key="4">
    <source>
    </source>
</evidence>
<evidence type="ECO:0000303" key="5">
    <source>
    </source>
</evidence>
<evidence type="ECO:0000305" key="6"/>
<evidence type="ECO:0000305" key="7">
    <source>
    </source>
</evidence>
<evidence type="ECO:0000305" key="8">
    <source>
    </source>
</evidence>
<evidence type="ECO:0000312" key="9">
    <source>
        <dbReference type="PDB" id="4K09"/>
    </source>
</evidence>
<evidence type="ECO:0007744" key="10">
    <source>
        <dbReference type="PDB" id="4K09"/>
    </source>
</evidence>
<feature type="chain" id="PRO_0000449046" description="Basic phospholipase A2 homolog 2" evidence="3">
    <location>
        <begin position="1"/>
        <end position="121"/>
    </location>
</feature>
<feature type="region of interest" description="Important for membrane-damaging activities in eukaryotes and bacteria; heparin-binding" evidence="2">
    <location>
        <begin position="105"/>
        <end position="117"/>
    </location>
</feature>
<feature type="site" description="Important residue of the cationic membrane-docking site (MDoS)" evidence="1">
    <location>
        <position position="105"/>
    </location>
</feature>
<feature type="site" description="Important residue of the cationic membrane-docking site (MDoS)" evidence="1">
    <location>
        <position position="108"/>
    </location>
</feature>
<feature type="site" description="Hydrophobic membrane-disruption site (MDiS)" evidence="1">
    <location>
        <position position="111"/>
    </location>
</feature>
<feature type="site" description="Cationic membrane-docking site (MDoS)" evidence="1">
    <location>
        <position position="112"/>
    </location>
</feature>
<feature type="site" description="Cationic membrane-docking site (MDoS)" evidence="1">
    <location>
        <position position="117"/>
    </location>
</feature>
<feature type="disulfide bond" evidence="4 10">
    <location>
        <begin position="26"/>
        <end position="115"/>
    </location>
</feature>
<feature type="disulfide bond" evidence="4 10">
    <location>
        <begin position="28"/>
        <end position="44"/>
    </location>
</feature>
<feature type="disulfide bond" evidence="4 10">
    <location>
        <begin position="43"/>
        <end position="95"/>
    </location>
</feature>
<feature type="disulfide bond" evidence="4 10">
    <location>
        <begin position="49"/>
        <end position="121"/>
    </location>
</feature>
<feature type="disulfide bond" evidence="4 10">
    <location>
        <begin position="50"/>
        <end position="88"/>
    </location>
</feature>
<feature type="disulfide bond" evidence="4 10">
    <location>
        <begin position="57"/>
        <end position="81"/>
    </location>
</feature>
<feature type="disulfide bond" evidence="4 10">
    <location>
        <begin position="75"/>
        <end position="86"/>
    </location>
</feature>
<feature type="sequence conflict" description="In Ref. 2." evidence="6" ref="2">
    <original>Y</original>
    <variation>N</variation>
    <location>
        <position position="27"/>
    </location>
</feature>
<feature type="sequence conflict" description="In Ref. 1; AA sequence." evidence="6" ref="1">
    <location>
        <position position="53"/>
    </location>
</feature>
<feature type="sequence conflict" description="In Ref. 2." evidence="6" ref="2">
    <original>N</original>
    <variation>Q</variation>
    <location>
        <position position="59"/>
    </location>
</feature>
<feature type="sequence conflict" description="In Ref. 1; AA sequence." evidence="6" ref="1">
    <original>K</original>
    <variation>KK</variation>
    <location>
        <position position="61"/>
    </location>
</feature>
<accession>P0DTS8</accession>
<comment type="function">
    <text evidence="3 8">Snake venom phospholipase A2 homolog that lacks enzymatic activity. Is myotoxic and displays edema-inducing activities in mouse paw (PubMed:19539640). Also displays cytotoxic activity against myotubes (PubMed:19539640). A model of myotoxic mechanism has been proposed: an apo Lys49-PLA2 is activated by the entrance of a hydrophobic molecule (e.g. fatty acid) at the hydrophobic channel of the protein leading to a reorientation of a monomer (PubMed:24145104). This reorientation causes a transition between 'inactive' to 'active' states, causing alignment of C-terminal and membrane-docking sites (MDoS) side-by-side and putting the membrane-disruption sites (MDiS) in the same plane, exposed to solvent and in a symmetric position for both monomers (PubMed:24145104). The MDoS region stabilizes the toxin on membrane by the interaction of charged residues with phospholipid head groups (PubMed:24145104). Subsequently, the MDiS region destabilizes the membrane with penetration of hydrophobic residues (PubMed:24145104). This insertion causes a disorganization of the membrane, allowing an uncontrolled influx of ions (i.e. calcium and sodium), and eventually triggering irreversible intracellular alterations and cell death (PubMed:24145104).</text>
</comment>
<comment type="subunit">
    <text evidence="4">Homodimer; non-covalently linked (probable alternative/compact dimer conformation in solution).</text>
</comment>
<comment type="subcellular location">
    <subcellularLocation>
        <location evidence="3">Secreted</location>
    </subcellularLocation>
</comment>
<comment type="tissue specificity">
    <text evidence="7">Expressed by the venom gland.</text>
</comment>
<comment type="similarity">
    <text evidence="6">Belongs to the phospholipase A2 family. Group II subfamily. K49 sub-subfamily.</text>
</comment>
<comment type="caution">
    <text evidence="6">Does not bind calcium as one of the calcium-binding sites is lost (Asp-&gt;Lys in position 48, which corresponds to 'Lys-49' in the current nomenclature).</text>
</comment>
<organism>
    <name type="scientific">Bothrops brazili</name>
    <name type="common">Brazil's lancehead</name>
    <dbReference type="NCBI Taxonomy" id="157546"/>
    <lineage>
        <taxon>Eukaryota</taxon>
        <taxon>Metazoa</taxon>
        <taxon>Chordata</taxon>
        <taxon>Craniata</taxon>
        <taxon>Vertebrata</taxon>
        <taxon>Euteleostomi</taxon>
        <taxon>Lepidosauria</taxon>
        <taxon>Squamata</taxon>
        <taxon>Bifurcata</taxon>
        <taxon>Unidentata</taxon>
        <taxon>Episquamata</taxon>
        <taxon>Toxicofera</taxon>
        <taxon>Serpentes</taxon>
        <taxon>Colubroidea</taxon>
        <taxon>Viperidae</taxon>
        <taxon>Crotalinae</taxon>
        <taxon>Bothrops</taxon>
    </lineage>
</organism>
<dbReference type="PDB" id="4K09">
    <property type="method" value="X-ray"/>
    <property type="resolution" value="2.11 A"/>
    <property type="chains" value="A/B=1-121"/>
</dbReference>
<dbReference type="PDBsum" id="4K09"/>
<dbReference type="SMR" id="P0DTS8"/>
<dbReference type="GO" id="GO:0005576">
    <property type="term" value="C:extracellular region"/>
    <property type="evidence" value="ECO:0007669"/>
    <property type="project" value="UniProtKB-SubCell"/>
</dbReference>
<dbReference type="GO" id="GO:0005509">
    <property type="term" value="F:calcium ion binding"/>
    <property type="evidence" value="ECO:0007669"/>
    <property type="project" value="InterPro"/>
</dbReference>
<dbReference type="GO" id="GO:0047498">
    <property type="term" value="F:calcium-dependent phospholipase A2 activity"/>
    <property type="evidence" value="ECO:0007669"/>
    <property type="project" value="TreeGrafter"/>
</dbReference>
<dbReference type="GO" id="GO:0005543">
    <property type="term" value="F:phospholipid binding"/>
    <property type="evidence" value="ECO:0007669"/>
    <property type="project" value="TreeGrafter"/>
</dbReference>
<dbReference type="GO" id="GO:0090729">
    <property type="term" value="F:toxin activity"/>
    <property type="evidence" value="ECO:0007669"/>
    <property type="project" value="UniProtKB-KW"/>
</dbReference>
<dbReference type="GO" id="GO:0050482">
    <property type="term" value="P:arachidonate secretion"/>
    <property type="evidence" value="ECO:0007669"/>
    <property type="project" value="InterPro"/>
</dbReference>
<dbReference type="GO" id="GO:0016042">
    <property type="term" value="P:lipid catabolic process"/>
    <property type="evidence" value="ECO:0007669"/>
    <property type="project" value="InterPro"/>
</dbReference>
<dbReference type="GO" id="GO:0042130">
    <property type="term" value="P:negative regulation of T cell proliferation"/>
    <property type="evidence" value="ECO:0007669"/>
    <property type="project" value="TreeGrafter"/>
</dbReference>
<dbReference type="GO" id="GO:0006644">
    <property type="term" value="P:phospholipid metabolic process"/>
    <property type="evidence" value="ECO:0007669"/>
    <property type="project" value="InterPro"/>
</dbReference>
<dbReference type="CDD" id="cd00125">
    <property type="entry name" value="PLA2c"/>
    <property type="match status" value="1"/>
</dbReference>
<dbReference type="FunFam" id="1.20.90.10:FF:000001">
    <property type="entry name" value="Basic phospholipase A2 homolog"/>
    <property type="match status" value="1"/>
</dbReference>
<dbReference type="Gene3D" id="1.20.90.10">
    <property type="entry name" value="Phospholipase A2 domain"/>
    <property type="match status" value="1"/>
</dbReference>
<dbReference type="InterPro" id="IPR001211">
    <property type="entry name" value="PLipase_A2"/>
</dbReference>
<dbReference type="InterPro" id="IPR033112">
    <property type="entry name" value="PLipase_A2_Asp_AS"/>
</dbReference>
<dbReference type="InterPro" id="IPR016090">
    <property type="entry name" value="PLipase_A2_dom"/>
</dbReference>
<dbReference type="InterPro" id="IPR036444">
    <property type="entry name" value="PLipase_A2_dom_sf"/>
</dbReference>
<dbReference type="InterPro" id="IPR033113">
    <property type="entry name" value="PLipase_A2_His_AS"/>
</dbReference>
<dbReference type="PANTHER" id="PTHR11716">
    <property type="entry name" value="PHOSPHOLIPASE A2 FAMILY MEMBER"/>
    <property type="match status" value="1"/>
</dbReference>
<dbReference type="PANTHER" id="PTHR11716:SF9">
    <property type="entry name" value="PHOSPHOLIPASE A2, MEMBRANE ASSOCIATED"/>
    <property type="match status" value="1"/>
</dbReference>
<dbReference type="Pfam" id="PF00068">
    <property type="entry name" value="Phospholip_A2_1"/>
    <property type="match status" value="1"/>
</dbReference>
<dbReference type="PRINTS" id="PR00389">
    <property type="entry name" value="PHPHLIPASEA2"/>
</dbReference>
<dbReference type="SMART" id="SM00085">
    <property type="entry name" value="PA2c"/>
    <property type="match status" value="1"/>
</dbReference>
<dbReference type="SUPFAM" id="SSF48619">
    <property type="entry name" value="Phospholipase A2, PLA2"/>
    <property type="match status" value="1"/>
</dbReference>
<dbReference type="PROSITE" id="PS00119">
    <property type="entry name" value="PA2_ASP"/>
    <property type="match status" value="1"/>
</dbReference>
<dbReference type="PROSITE" id="PS00118">
    <property type="entry name" value="PA2_HIS"/>
    <property type="match status" value="1"/>
</dbReference>
<reference key="1">
    <citation type="journal article" date="2009" name="Toxicon">
        <title>Structural and functional characterization of brazilitoxins II and III (BbTX-II and -III), two myotoxins from the venom of Bothrops brazili snake.</title>
        <authorList>
            <person name="Huancahuire-Vega S."/>
            <person name="Ponce-Soto L.A."/>
            <person name="Martins-de-Souza D."/>
            <person name="Marangoni S."/>
        </authorList>
    </citation>
    <scope>PROTEIN SEQUENCE</scope>
    <scope>FUNCTION</scope>
    <scope>SUBCELLULAR LOCATION</scope>
    <scope>SUBUNIT</scope>
    <source>
        <tissue>Venom</tissue>
    </source>
</reference>
<reference evidence="9" key="2">
    <citation type="journal article" date="2013" name="Biochim. Biophys. Acta">
        <title>Structural bases for a complete myotoxic mechanism: crystal structures of two non-catalytic phospholipases A2-like from Bothrops brazili venom.</title>
        <authorList>
            <person name="Fernandes C.A."/>
            <person name="Comparetti E.J."/>
            <person name="Borges R.J."/>
            <person name="Huancahuire-Vega S."/>
            <person name="Ponce-Soto L.A."/>
            <person name="Marangoni S."/>
            <person name="Soares A.M."/>
            <person name="Fontes M.R."/>
        </authorList>
    </citation>
    <scope>X-RAY CRYSTALLOGRAPHY (2.08 ANGSTROMS)</scope>
    <scope>DISULFIDE BONDS</scope>
    <scope>SUBUNIT</scope>
</reference>
<proteinExistence type="evidence at protein level"/>
<sequence length="121" mass="13790">SLFELGKMILQETGKNPAKSYGAYGCYCGVLGRGKPKDATDRCCYVHKCCYKKLTGCDNKKDRYSYSWKDKTIVCGENNPCLKELCECDKAVAICLRENLNTYNKKYRYHLKPLCKKADAC</sequence>
<protein>
    <recommendedName>
        <fullName>Basic phospholipase A2 homolog 2</fullName>
        <shortName>svPLA2 homolog</shortName>
    </recommendedName>
    <alternativeName>
        <fullName evidence="5">Brazilitoxin II</fullName>
        <shortName evidence="5">BbTX-II</shortName>
    </alternativeName>
</protein>
<name>PA2H2_BOTBZ</name>